<protein>
    <recommendedName>
        <fullName evidence="1">Glycine--tRNA ligase alpha subunit</fullName>
        <ecNumber evidence="1">6.1.1.14</ecNumber>
    </recommendedName>
    <alternativeName>
        <fullName evidence="1">Glycyl-tRNA synthetase alpha subunit</fullName>
        <shortName evidence="1">GlyRS</shortName>
    </alternativeName>
</protein>
<organism>
    <name type="scientific">Salmonella enteritidis PT4 (strain P125109)</name>
    <dbReference type="NCBI Taxonomy" id="550537"/>
    <lineage>
        <taxon>Bacteria</taxon>
        <taxon>Pseudomonadati</taxon>
        <taxon>Pseudomonadota</taxon>
        <taxon>Gammaproteobacteria</taxon>
        <taxon>Enterobacterales</taxon>
        <taxon>Enterobacteriaceae</taxon>
        <taxon>Salmonella</taxon>
    </lineage>
</organism>
<gene>
    <name evidence="1" type="primary">glyQ</name>
    <name type="ordered locus">SEN3478</name>
</gene>
<dbReference type="EC" id="6.1.1.14" evidence="1"/>
<dbReference type="EMBL" id="AM933172">
    <property type="protein sequence ID" value="CAR35057.1"/>
    <property type="molecule type" value="Genomic_DNA"/>
</dbReference>
<dbReference type="RefSeq" id="WP_001168551.1">
    <property type="nucleotide sequence ID" value="NC_011294.1"/>
</dbReference>
<dbReference type="SMR" id="B5R4P3"/>
<dbReference type="GeneID" id="89546728"/>
<dbReference type="KEGG" id="set:SEN3478"/>
<dbReference type="HOGENOM" id="CLU_057066_1_0_6"/>
<dbReference type="Proteomes" id="UP000000613">
    <property type="component" value="Chromosome"/>
</dbReference>
<dbReference type="GO" id="GO:0005829">
    <property type="term" value="C:cytosol"/>
    <property type="evidence" value="ECO:0007669"/>
    <property type="project" value="TreeGrafter"/>
</dbReference>
<dbReference type="GO" id="GO:0005524">
    <property type="term" value="F:ATP binding"/>
    <property type="evidence" value="ECO:0007669"/>
    <property type="project" value="UniProtKB-UniRule"/>
</dbReference>
<dbReference type="GO" id="GO:0004820">
    <property type="term" value="F:glycine-tRNA ligase activity"/>
    <property type="evidence" value="ECO:0007669"/>
    <property type="project" value="UniProtKB-UniRule"/>
</dbReference>
<dbReference type="GO" id="GO:0006426">
    <property type="term" value="P:glycyl-tRNA aminoacylation"/>
    <property type="evidence" value="ECO:0007669"/>
    <property type="project" value="UniProtKB-UniRule"/>
</dbReference>
<dbReference type="CDD" id="cd00733">
    <property type="entry name" value="GlyRS_alpha_core"/>
    <property type="match status" value="1"/>
</dbReference>
<dbReference type="FunFam" id="1.20.58.180:FF:000001">
    <property type="entry name" value="Glycine--tRNA ligase alpha subunit"/>
    <property type="match status" value="1"/>
</dbReference>
<dbReference type="FunFam" id="3.30.930.10:FF:000006">
    <property type="entry name" value="Glycine--tRNA ligase alpha subunit"/>
    <property type="match status" value="1"/>
</dbReference>
<dbReference type="Gene3D" id="3.30.930.10">
    <property type="entry name" value="Bira Bifunctional Protein, Domain 2"/>
    <property type="match status" value="1"/>
</dbReference>
<dbReference type="Gene3D" id="1.20.58.180">
    <property type="entry name" value="Class II aaRS and biotin synthetases, domain 2"/>
    <property type="match status" value="1"/>
</dbReference>
<dbReference type="HAMAP" id="MF_00254">
    <property type="entry name" value="Gly_tRNA_synth_alpha"/>
    <property type="match status" value="1"/>
</dbReference>
<dbReference type="InterPro" id="IPR045864">
    <property type="entry name" value="aa-tRNA-synth_II/BPL/LPL"/>
</dbReference>
<dbReference type="InterPro" id="IPR006194">
    <property type="entry name" value="Gly-tRNA-synth_heterodimer"/>
</dbReference>
<dbReference type="InterPro" id="IPR002310">
    <property type="entry name" value="Gly-tRNA_ligase_asu"/>
</dbReference>
<dbReference type="NCBIfam" id="TIGR00388">
    <property type="entry name" value="glyQ"/>
    <property type="match status" value="1"/>
</dbReference>
<dbReference type="NCBIfam" id="NF006827">
    <property type="entry name" value="PRK09348.1"/>
    <property type="match status" value="1"/>
</dbReference>
<dbReference type="PANTHER" id="PTHR30075:SF2">
    <property type="entry name" value="GLYCINE--TRNA LIGASE, CHLOROPLASTIC_MITOCHONDRIAL 2"/>
    <property type="match status" value="1"/>
</dbReference>
<dbReference type="PANTHER" id="PTHR30075">
    <property type="entry name" value="GLYCYL-TRNA SYNTHETASE"/>
    <property type="match status" value="1"/>
</dbReference>
<dbReference type="Pfam" id="PF02091">
    <property type="entry name" value="tRNA-synt_2e"/>
    <property type="match status" value="1"/>
</dbReference>
<dbReference type="PRINTS" id="PR01044">
    <property type="entry name" value="TRNASYNTHGA"/>
</dbReference>
<dbReference type="SUPFAM" id="SSF55681">
    <property type="entry name" value="Class II aaRS and biotin synthetases"/>
    <property type="match status" value="1"/>
</dbReference>
<dbReference type="PROSITE" id="PS50861">
    <property type="entry name" value="AA_TRNA_LIGASE_II_GLYAB"/>
    <property type="match status" value="1"/>
</dbReference>
<evidence type="ECO:0000255" key="1">
    <source>
        <dbReference type="HAMAP-Rule" id="MF_00254"/>
    </source>
</evidence>
<reference key="1">
    <citation type="journal article" date="2008" name="Genome Res.">
        <title>Comparative genome analysis of Salmonella enteritidis PT4 and Salmonella gallinarum 287/91 provides insights into evolutionary and host adaptation pathways.</title>
        <authorList>
            <person name="Thomson N.R."/>
            <person name="Clayton D.J."/>
            <person name="Windhorst D."/>
            <person name="Vernikos G."/>
            <person name="Davidson S."/>
            <person name="Churcher C."/>
            <person name="Quail M.A."/>
            <person name="Stevens M."/>
            <person name="Jones M.A."/>
            <person name="Watson M."/>
            <person name="Barron A."/>
            <person name="Layton A."/>
            <person name="Pickard D."/>
            <person name="Kingsley R.A."/>
            <person name="Bignell A."/>
            <person name="Clark L."/>
            <person name="Harris B."/>
            <person name="Ormond D."/>
            <person name="Abdellah Z."/>
            <person name="Brooks K."/>
            <person name="Cherevach I."/>
            <person name="Chillingworth T."/>
            <person name="Woodward J."/>
            <person name="Norberczak H."/>
            <person name="Lord A."/>
            <person name="Arrowsmith C."/>
            <person name="Jagels K."/>
            <person name="Moule S."/>
            <person name="Mungall K."/>
            <person name="Saunders M."/>
            <person name="Whitehead S."/>
            <person name="Chabalgoity J.A."/>
            <person name="Maskell D."/>
            <person name="Humphreys T."/>
            <person name="Roberts M."/>
            <person name="Barrow P.A."/>
            <person name="Dougan G."/>
            <person name="Parkhill J."/>
        </authorList>
    </citation>
    <scope>NUCLEOTIDE SEQUENCE [LARGE SCALE GENOMIC DNA]</scope>
    <source>
        <strain>P125109</strain>
    </source>
</reference>
<accession>B5R4P3</accession>
<proteinExistence type="inferred from homology"/>
<sequence>MQKFDTRTFQGLILTLQDYWARQGCTIVQPLDMEVGAGTSHPMTCLRALGPEPMATAYVQPSRRPTDGRYGENPNRLQHYYQFQVVIKPSPDNIQELYLGSLKELGMDPTIHDIRFVEDNWENPTLGAWGLGWEVWLNGMEVTQFTYFQQVGGLECKPVTGEITYGLERLAMYIQGVDSVYDLVWSDGPLGKTTYGDVFHQNEVEQSTYNFEYADVDFLFTCFEQYEKEAQQLLALENPLPLPAYERILKAAHSFNLLDARKAISVTERQRYILRIRTLTKAVAEAYYASREALGFPMCNKDK</sequence>
<name>SYGA_SALEP</name>
<comment type="catalytic activity">
    <reaction evidence="1">
        <text>tRNA(Gly) + glycine + ATP = glycyl-tRNA(Gly) + AMP + diphosphate</text>
        <dbReference type="Rhea" id="RHEA:16013"/>
        <dbReference type="Rhea" id="RHEA-COMP:9664"/>
        <dbReference type="Rhea" id="RHEA-COMP:9683"/>
        <dbReference type="ChEBI" id="CHEBI:30616"/>
        <dbReference type="ChEBI" id="CHEBI:33019"/>
        <dbReference type="ChEBI" id="CHEBI:57305"/>
        <dbReference type="ChEBI" id="CHEBI:78442"/>
        <dbReference type="ChEBI" id="CHEBI:78522"/>
        <dbReference type="ChEBI" id="CHEBI:456215"/>
        <dbReference type="EC" id="6.1.1.14"/>
    </reaction>
</comment>
<comment type="subunit">
    <text evidence="1">Tetramer of two alpha and two beta subunits.</text>
</comment>
<comment type="subcellular location">
    <subcellularLocation>
        <location evidence="1">Cytoplasm</location>
    </subcellularLocation>
</comment>
<comment type="similarity">
    <text evidence="1">Belongs to the class-II aminoacyl-tRNA synthetase family.</text>
</comment>
<keyword id="KW-0030">Aminoacyl-tRNA synthetase</keyword>
<keyword id="KW-0067">ATP-binding</keyword>
<keyword id="KW-0963">Cytoplasm</keyword>
<keyword id="KW-0436">Ligase</keyword>
<keyword id="KW-0547">Nucleotide-binding</keyword>
<keyword id="KW-0648">Protein biosynthesis</keyword>
<feature type="chain" id="PRO_1000101225" description="Glycine--tRNA ligase alpha subunit">
    <location>
        <begin position="1"/>
        <end position="303"/>
    </location>
</feature>